<sequence length="224" mass="24032">MSPIEPAASAIFGPRLGLARRYAEALAGPGVERGLVGPREVGRLWDRHLLNCAVIGELLERGDRVVDIGSGAGLPGVPLAIARPDLQVVLLEPLLRRTEFLREMVTDLGVAVEIVRGRAEESWVQDQLGGSDAAVSRAVAALDKLTKWSMPLIRPNGRMLAIKGERAHDEVREHRRVMIASGAVDVRVVTCGANYLRPPATVVFARRGKQIARGSARMASGGTA</sequence>
<protein>
    <recommendedName>
        <fullName evidence="1">Ribosomal RNA small subunit methyltransferase G</fullName>
        <ecNumber evidence="1">2.1.1.-</ecNumber>
    </recommendedName>
    <alternativeName>
        <fullName evidence="1">16S rRNA 7-methylguanosine methyltransferase</fullName>
        <shortName evidence="1">16S rRNA m7G methyltransferase</shortName>
    </alternativeName>
</protein>
<gene>
    <name evidence="1" type="primary">rsmG1</name>
    <name type="ordered locus">BCG_0025c</name>
</gene>
<gene>
    <name evidence="1" type="primary">rsmG2</name>
    <name type="ordered locus">BCG_3977c</name>
</gene>
<comment type="function">
    <text evidence="1">Specifically methylates the N7 position of guanine in position 518 of 16S rRNA.</text>
</comment>
<comment type="subcellular location">
    <subcellularLocation>
        <location evidence="1">Cytoplasm</location>
    </subcellularLocation>
</comment>
<comment type="similarity">
    <text evidence="1">Belongs to the methyltransferase superfamily. RNA methyltransferase RsmG family.</text>
</comment>
<evidence type="ECO:0000255" key="1">
    <source>
        <dbReference type="HAMAP-Rule" id="MF_00074"/>
    </source>
</evidence>
<proteinExistence type="inferred from homology"/>
<accession>A1KEG3</accession>
<organism>
    <name type="scientific">Mycobacterium bovis (strain BCG / Pasteur 1173P2)</name>
    <dbReference type="NCBI Taxonomy" id="410289"/>
    <lineage>
        <taxon>Bacteria</taxon>
        <taxon>Bacillati</taxon>
        <taxon>Actinomycetota</taxon>
        <taxon>Actinomycetes</taxon>
        <taxon>Mycobacteriales</taxon>
        <taxon>Mycobacteriaceae</taxon>
        <taxon>Mycobacterium</taxon>
        <taxon>Mycobacterium tuberculosis complex</taxon>
    </lineage>
</organism>
<reference key="1">
    <citation type="journal article" date="2007" name="Proc. Natl. Acad. Sci. U.S.A.">
        <title>Genome plasticity of BCG and impact on vaccine efficacy.</title>
        <authorList>
            <person name="Brosch R."/>
            <person name="Gordon S.V."/>
            <person name="Garnier T."/>
            <person name="Eiglmeier K."/>
            <person name="Frigui W."/>
            <person name="Valenti P."/>
            <person name="Dos Santos S."/>
            <person name="Duthoy S."/>
            <person name="Lacroix C."/>
            <person name="Garcia-Pelayo C."/>
            <person name="Inwald J.K."/>
            <person name="Golby P."/>
            <person name="Garcia J.N."/>
            <person name="Hewinson R.G."/>
            <person name="Behr M.A."/>
            <person name="Quail M.A."/>
            <person name="Churcher C."/>
            <person name="Barrell B.G."/>
            <person name="Parkhill J."/>
            <person name="Cole S.T."/>
        </authorList>
    </citation>
    <scope>NUCLEOTIDE SEQUENCE [LARGE SCALE GENOMIC DNA]</scope>
    <source>
        <strain>BCG / Pasteur 1173P2</strain>
    </source>
</reference>
<dbReference type="EC" id="2.1.1.-" evidence="1"/>
<dbReference type="EMBL" id="AM408590">
    <property type="protein sequence ID" value="CAL70009.1"/>
    <property type="molecule type" value="Genomic_DNA"/>
</dbReference>
<dbReference type="EMBL" id="AM408590">
    <property type="protein sequence ID" value="CAL73967.1"/>
    <property type="molecule type" value="Genomic_DNA"/>
</dbReference>
<dbReference type="SMR" id="A1KEG3"/>
<dbReference type="KEGG" id="mbb:BCG_0025c"/>
<dbReference type="KEGG" id="mbb:BCG_3977c"/>
<dbReference type="HOGENOM" id="CLU_065341_5_0_11"/>
<dbReference type="Proteomes" id="UP000001472">
    <property type="component" value="Chromosome"/>
</dbReference>
<dbReference type="GO" id="GO:0005829">
    <property type="term" value="C:cytosol"/>
    <property type="evidence" value="ECO:0007669"/>
    <property type="project" value="TreeGrafter"/>
</dbReference>
<dbReference type="GO" id="GO:0070043">
    <property type="term" value="F:rRNA (guanine-N7-)-methyltransferase activity"/>
    <property type="evidence" value="ECO:0007669"/>
    <property type="project" value="UniProtKB-UniRule"/>
</dbReference>
<dbReference type="FunFam" id="3.40.50.150:FF:000117">
    <property type="entry name" value="Ribosomal RNA small subunit methyltransferase G"/>
    <property type="match status" value="1"/>
</dbReference>
<dbReference type="Gene3D" id="3.40.50.150">
    <property type="entry name" value="Vaccinia Virus protein VP39"/>
    <property type="match status" value="1"/>
</dbReference>
<dbReference type="HAMAP" id="MF_00074">
    <property type="entry name" value="16SrRNA_methyltr_G"/>
    <property type="match status" value="1"/>
</dbReference>
<dbReference type="InterPro" id="IPR003682">
    <property type="entry name" value="rRNA_ssu_MeTfrase_G"/>
</dbReference>
<dbReference type="InterPro" id="IPR029063">
    <property type="entry name" value="SAM-dependent_MTases_sf"/>
</dbReference>
<dbReference type="NCBIfam" id="TIGR00138">
    <property type="entry name" value="rsmG_gidB"/>
    <property type="match status" value="1"/>
</dbReference>
<dbReference type="PANTHER" id="PTHR31760">
    <property type="entry name" value="S-ADENOSYL-L-METHIONINE-DEPENDENT METHYLTRANSFERASES SUPERFAMILY PROTEIN"/>
    <property type="match status" value="1"/>
</dbReference>
<dbReference type="PANTHER" id="PTHR31760:SF0">
    <property type="entry name" value="S-ADENOSYL-L-METHIONINE-DEPENDENT METHYLTRANSFERASES SUPERFAMILY PROTEIN"/>
    <property type="match status" value="1"/>
</dbReference>
<dbReference type="Pfam" id="PF02527">
    <property type="entry name" value="GidB"/>
    <property type="match status" value="1"/>
</dbReference>
<dbReference type="PIRSF" id="PIRSF003078">
    <property type="entry name" value="GidB"/>
    <property type="match status" value="1"/>
</dbReference>
<dbReference type="SUPFAM" id="SSF53335">
    <property type="entry name" value="S-adenosyl-L-methionine-dependent methyltransferases"/>
    <property type="match status" value="1"/>
</dbReference>
<feature type="chain" id="PRO_0000335374" description="Ribosomal RNA small subunit methyltransferase G">
    <location>
        <begin position="1"/>
        <end position="224"/>
    </location>
</feature>
<feature type="binding site" evidence="1">
    <location>
        <position position="69"/>
    </location>
    <ligand>
        <name>S-adenosyl-L-methionine</name>
        <dbReference type="ChEBI" id="CHEBI:59789"/>
    </ligand>
</feature>
<feature type="binding site" evidence="1">
    <location>
        <position position="74"/>
    </location>
    <ligand>
        <name>S-adenosyl-L-methionine</name>
        <dbReference type="ChEBI" id="CHEBI:59789"/>
    </ligand>
</feature>
<feature type="binding site" evidence="1">
    <location>
        <begin position="119"/>
        <end position="120"/>
    </location>
    <ligand>
        <name>S-adenosyl-L-methionine</name>
        <dbReference type="ChEBI" id="CHEBI:59789"/>
    </ligand>
</feature>
<feature type="binding site" evidence="1">
    <location>
        <position position="137"/>
    </location>
    <ligand>
        <name>S-adenosyl-L-methionine</name>
        <dbReference type="ChEBI" id="CHEBI:59789"/>
    </ligand>
</feature>
<name>RSMG_MYCBP</name>
<keyword id="KW-0963">Cytoplasm</keyword>
<keyword id="KW-0489">Methyltransferase</keyword>
<keyword id="KW-0698">rRNA processing</keyword>
<keyword id="KW-0949">S-adenosyl-L-methionine</keyword>
<keyword id="KW-0808">Transferase</keyword>